<evidence type="ECO:0000255" key="1">
    <source>
        <dbReference type="HAMAP-Rule" id="MF_01043"/>
    </source>
</evidence>
<evidence type="ECO:0000256" key="2">
    <source>
        <dbReference type="SAM" id="MobiDB-lite"/>
    </source>
</evidence>
<comment type="function">
    <text evidence="1">Catalyzes the transfer of an acyl group from acyl-phosphate (acyl-PO(4)) to glycerol-3-phosphate (G3P) to form lysophosphatidic acid (LPA). This enzyme utilizes acyl-phosphate as fatty acyl donor, but not acyl-CoA or acyl-ACP.</text>
</comment>
<comment type="catalytic activity">
    <reaction evidence="1">
        <text>an acyl phosphate + sn-glycerol 3-phosphate = a 1-acyl-sn-glycero-3-phosphate + phosphate</text>
        <dbReference type="Rhea" id="RHEA:34075"/>
        <dbReference type="ChEBI" id="CHEBI:43474"/>
        <dbReference type="ChEBI" id="CHEBI:57597"/>
        <dbReference type="ChEBI" id="CHEBI:57970"/>
        <dbReference type="ChEBI" id="CHEBI:59918"/>
        <dbReference type="EC" id="2.3.1.275"/>
    </reaction>
</comment>
<comment type="pathway">
    <text evidence="1">Lipid metabolism; phospholipid metabolism.</text>
</comment>
<comment type="subunit">
    <text evidence="1">Probably interacts with PlsX.</text>
</comment>
<comment type="subcellular location">
    <subcellularLocation>
        <location evidence="1">Cell inner membrane</location>
        <topology evidence="1">Multi-pass membrane protein</topology>
    </subcellularLocation>
</comment>
<comment type="similarity">
    <text evidence="1">Belongs to the PlsY family.</text>
</comment>
<keyword id="KW-0997">Cell inner membrane</keyword>
<keyword id="KW-1003">Cell membrane</keyword>
<keyword id="KW-0444">Lipid biosynthesis</keyword>
<keyword id="KW-0443">Lipid metabolism</keyword>
<keyword id="KW-0472">Membrane</keyword>
<keyword id="KW-0594">Phospholipid biosynthesis</keyword>
<keyword id="KW-1208">Phospholipid metabolism</keyword>
<keyword id="KW-1185">Reference proteome</keyword>
<keyword id="KW-0808">Transferase</keyword>
<keyword id="KW-0812">Transmembrane</keyword>
<keyword id="KW-1133">Transmembrane helix</keyword>
<sequence length="327" mass="33401">MGSLLWLAVAYVMGSIPFGLLFAKMFCGTDPRTGGSRNVGATNVARLCGTKVGVLTLVCDALKGAIPVAVALSISDSTVFHSLTALAALLGHLYSCFLSFKGGKAVATTVGVFLPLAFWPLVLSGIACLAVIWRSGFVSLGSLTLVTAMPAMLLLGGHWKLVPLALVVMVLVYWSHRENIGRLSRGEEKPWQKKHHDAAQGTDAGAAPEAAADAAHAGTVDCGCDCGCDAHKPSTEAAPSQETSDASAHGAEAPVAADEGDKRENEEHDNAPEASAAESKPEDKPAGKTVGKPASRSVAKPASKSAGKTGGKAADKSAGKSGKSSGQ</sequence>
<proteinExistence type="inferred from homology"/>
<feature type="chain" id="PRO_0000188362" description="Glycerol-3-phosphate acyltransferase">
    <location>
        <begin position="1"/>
        <end position="327"/>
    </location>
</feature>
<feature type="transmembrane region" description="Helical" evidence="1">
    <location>
        <begin position="3"/>
        <end position="23"/>
    </location>
</feature>
<feature type="transmembrane region" description="Helical" evidence="1">
    <location>
        <begin position="52"/>
        <end position="72"/>
    </location>
</feature>
<feature type="transmembrane region" description="Helical" evidence="1">
    <location>
        <begin position="78"/>
        <end position="98"/>
    </location>
</feature>
<feature type="transmembrane region" description="Helical" evidence="1">
    <location>
        <begin position="112"/>
        <end position="132"/>
    </location>
</feature>
<feature type="transmembrane region" description="Helical" evidence="1">
    <location>
        <begin position="152"/>
        <end position="172"/>
    </location>
</feature>
<feature type="region of interest" description="Disordered" evidence="2">
    <location>
        <begin position="184"/>
        <end position="212"/>
    </location>
</feature>
<feature type="region of interest" description="Disordered" evidence="2">
    <location>
        <begin position="233"/>
        <end position="327"/>
    </location>
</feature>
<feature type="compositionally biased region" description="Low complexity" evidence="2">
    <location>
        <begin position="199"/>
        <end position="212"/>
    </location>
</feature>
<feature type="compositionally biased region" description="Polar residues" evidence="2">
    <location>
        <begin position="237"/>
        <end position="246"/>
    </location>
</feature>
<feature type="compositionally biased region" description="Basic and acidic residues" evidence="2">
    <location>
        <begin position="259"/>
        <end position="271"/>
    </location>
</feature>
<gene>
    <name evidence="1" type="primary">plsY</name>
    <name type="ordered locus">DVU_3208</name>
</gene>
<protein>
    <recommendedName>
        <fullName evidence="1">Glycerol-3-phosphate acyltransferase</fullName>
    </recommendedName>
    <alternativeName>
        <fullName evidence="1">Acyl-PO4 G3P acyltransferase</fullName>
    </alternativeName>
    <alternativeName>
        <fullName evidence="1">Acyl-phosphate--glycerol-3-phosphate acyltransferase</fullName>
    </alternativeName>
    <alternativeName>
        <fullName evidence="1">G3P acyltransferase</fullName>
        <shortName evidence="1">GPAT</shortName>
        <ecNumber evidence="1">2.3.1.275</ecNumber>
    </alternativeName>
    <alternativeName>
        <fullName evidence="1">Lysophosphatidic acid synthase</fullName>
        <shortName evidence="1">LPA synthase</shortName>
    </alternativeName>
</protein>
<accession>Q726E5</accession>
<organism>
    <name type="scientific">Nitratidesulfovibrio vulgaris (strain ATCC 29579 / DSM 644 / CCUG 34227 / NCIMB 8303 / VKM B-1760 / Hildenborough)</name>
    <name type="common">Desulfovibrio vulgaris</name>
    <dbReference type="NCBI Taxonomy" id="882"/>
    <lineage>
        <taxon>Bacteria</taxon>
        <taxon>Pseudomonadati</taxon>
        <taxon>Thermodesulfobacteriota</taxon>
        <taxon>Desulfovibrionia</taxon>
        <taxon>Desulfovibrionales</taxon>
        <taxon>Desulfovibrionaceae</taxon>
        <taxon>Nitratidesulfovibrio</taxon>
    </lineage>
</organism>
<dbReference type="EC" id="2.3.1.275" evidence="1"/>
<dbReference type="EMBL" id="AE017285">
    <property type="protein sequence ID" value="AAS97678.1"/>
    <property type="molecule type" value="Genomic_DNA"/>
</dbReference>
<dbReference type="RefSeq" id="WP_010940466.1">
    <property type="nucleotide sequence ID" value="NC_002937.3"/>
</dbReference>
<dbReference type="RefSeq" id="YP_012418.1">
    <property type="nucleotide sequence ID" value="NC_002937.3"/>
</dbReference>
<dbReference type="SMR" id="Q726E5"/>
<dbReference type="STRING" id="882.DVU_3208"/>
<dbReference type="PaxDb" id="882-DVU_3208"/>
<dbReference type="EnsemblBacteria" id="AAS97678">
    <property type="protein sequence ID" value="AAS97678"/>
    <property type="gene ID" value="DVU_3208"/>
</dbReference>
<dbReference type="KEGG" id="dvu:DVU_3208"/>
<dbReference type="PATRIC" id="fig|882.5.peg.2916"/>
<dbReference type="eggNOG" id="COG0344">
    <property type="taxonomic scope" value="Bacteria"/>
</dbReference>
<dbReference type="HOGENOM" id="CLU_849240_0_0_7"/>
<dbReference type="OrthoDB" id="9777124at2"/>
<dbReference type="PhylomeDB" id="Q726E5"/>
<dbReference type="UniPathway" id="UPA00085"/>
<dbReference type="Proteomes" id="UP000002194">
    <property type="component" value="Chromosome"/>
</dbReference>
<dbReference type="GO" id="GO:0005886">
    <property type="term" value="C:plasma membrane"/>
    <property type="evidence" value="ECO:0007669"/>
    <property type="project" value="UniProtKB-SubCell"/>
</dbReference>
<dbReference type="GO" id="GO:0043772">
    <property type="term" value="F:acyl-phosphate glycerol-3-phosphate acyltransferase activity"/>
    <property type="evidence" value="ECO:0007669"/>
    <property type="project" value="UniProtKB-UniRule"/>
</dbReference>
<dbReference type="GO" id="GO:0008654">
    <property type="term" value="P:phospholipid biosynthetic process"/>
    <property type="evidence" value="ECO:0007669"/>
    <property type="project" value="UniProtKB-UniRule"/>
</dbReference>
<dbReference type="HAMAP" id="MF_01043">
    <property type="entry name" value="PlsY"/>
    <property type="match status" value="1"/>
</dbReference>
<dbReference type="InterPro" id="IPR003811">
    <property type="entry name" value="G3P_acylTferase_PlsY"/>
</dbReference>
<dbReference type="NCBIfam" id="TIGR00023">
    <property type="entry name" value="glycerol-3-phosphate 1-O-acyltransferase PlsY"/>
    <property type="match status" value="1"/>
</dbReference>
<dbReference type="PANTHER" id="PTHR30309:SF0">
    <property type="entry name" value="GLYCEROL-3-PHOSPHATE ACYLTRANSFERASE-RELATED"/>
    <property type="match status" value="1"/>
</dbReference>
<dbReference type="PANTHER" id="PTHR30309">
    <property type="entry name" value="INNER MEMBRANE PROTEIN YGIH"/>
    <property type="match status" value="1"/>
</dbReference>
<dbReference type="Pfam" id="PF02660">
    <property type="entry name" value="G3P_acyltransf"/>
    <property type="match status" value="1"/>
</dbReference>
<dbReference type="SMART" id="SM01207">
    <property type="entry name" value="G3P_acyltransf"/>
    <property type="match status" value="1"/>
</dbReference>
<name>PLSY_NITV2</name>
<reference key="1">
    <citation type="journal article" date="2004" name="Nat. Biotechnol.">
        <title>The genome sequence of the anaerobic, sulfate-reducing bacterium Desulfovibrio vulgaris Hildenborough.</title>
        <authorList>
            <person name="Heidelberg J.F."/>
            <person name="Seshadri R."/>
            <person name="Haveman S.A."/>
            <person name="Hemme C.L."/>
            <person name="Paulsen I.T."/>
            <person name="Kolonay J.F."/>
            <person name="Eisen J.A."/>
            <person name="Ward N.L."/>
            <person name="Methe B.A."/>
            <person name="Brinkac L.M."/>
            <person name="Daugherty S.C."/>
            <person name="DeBoy R.T."/>
            <person name="Dodson R.J."/>
            <person name="Durkin A.S."/>
            <person name="Madupu R."/>
            <person name="Nelson W.C."/>
            <person name="Sullivan S.A."/>
            <person name="Fouts D.E."/>
            <person name="Haft D.H."/>
            <person name="Selengut J."/>
            <person name="Peterson J.D."/>
            <person name="Davidsen T.M."/>
            <person name="Zafar N."/>
            <person name="Zhou L."/>
            <person name="Radune D."/>
            <person name="Dimitrov G."/>
            <person name="Hance M."/>
            <person name="Tran K."/>
            <person name="Khouri H.M."/>
            <person name="Gill J."/>
            <person name="Utterback T.R."/>
            <person name="Feldblyum T.V."/>
            <person name="Wall J.D."/>
            <person name="Voordouw G."/>
            <person name="Fraser C.M."/>
        </authorList>
    </citation>
    <scope>NUCLEOTIDE SEQUENCE [LARGE SCALE GENOMIC DNA]</scope>
    <source>
        <strain>ATCC 29579 / DSM 644 / CCUG 34227 / NCIMB 8303 / VKM B-1760 / Hildenborough</strain>
    </source>
</reference>